<name>S2544_MOUSE</name>
<reference key="1">
    <citation type="journal article" date="2005" name="Science">
        <title>The transcriptional landscape of the mammalian genome.</title>
        <authorList>
            <person name="Carninci P."/>
            <person name="Kasukawa T."/>
            <person name="Katayama S."/>
            <person name="Gough J."/>
            <person name="Frith M.C."/>
            <person name="Maeda N."/>
            <person name="Oyama R."/>
            <person name="Ravasi T."/>
            <person name="Lenhard B."/>
            <person name="Wells C."/>
            <person name="Kodzius R."/>
            <person name="Shimokawa K."/>
            <person name="Bajic V.B."/>
            <person name="Brenner S.E."/>
            <person name="Batalov S."/>
            <person name="Forrest A.R."/>
            <person name="Zavolan M."/>
            <person name="Davis M.J."/>
            <person name="Wilming L.G."/>
            <person name="Aidinis V."/>
            <person name="Allen J.E."/>
            <person name="Ambesi-Impiombato A."/>
            <person name="Apweiler R."/>
            <person name="Aturaliya R.N."/>
            <person name="Bailey T.L."/>
            <person name="Bansal M."/>
            <person name="Baxter L."/>
            <person name="Beisel K.W."/>
            <person name="Bersano T."/>
            <person name="Bono H."/>
            <person name="Chalk A.M."/>
            <person name="Chiu K.P."/>
            <person name="Choudhary V."/>
            <person name="Christoffels A."/>
            <person name="Clutterbuck D.R."/>
            <person name="Crowe M.L."/>
            <person name="Dalla E."/>
            <person name="Dalrymple B.P."/>
            <person name="de Bono B."/>
            <person name="Della Gatta G."/>
            <person name="di Bernardo D."/>
            <person name="Down T."/>
            <person name="Engstrom P."/>
            <person name="Fagiolini M."/>
            <person name="Faulkner G."/>
            <person name="Fletcher C.F."/>
            <person name="Fukushima T."/>
            <person name="Furuno M."/>
            <person name="Futaki S."/>
            <person name="Gariboldi M."/>
            <person name="Georgii-Hemming P."/>
            <person name="Gingeras T.R."/>
            <person name="Gojobori T."/>
            <person name="Green R.E."/>
            <person name="Gustincich S."/>
            <person name="Harbers M."/>
            <person name="Hayashi Y."/>
            <person name="Hensch T.K."/>
            <person name="Hirokawa N."/>
            <person name="Hill D."/>
            <person name="Huminiecki L."/>
            <person name="Iacono M."/>
            <person name="Ikeo K."/>
            <person name="Iwama A."/>
            <person name="Ishikawa T."/>
            <person name="Jakt M."/>
            <person name="Kanapin A."/>
            <person name="Katoh M."/>
            <person name="Kawasawa Y."/>
            <person name="Kelso J."/>
            <person name="Kitamura H."/>
            <person name="Kitano H."/>
            <person name="Kollias G."/>
            <person name="Krishnan S.P."/>
            <person name="Kruger A."/>
            <person name="Kummerfeld S.K."/>
            <person name="Kurochkin I.V."/>
            <person name="Lareau L.F."/>
            <person name="Lazarevic D."/>
            <person name="Lipovich L."/>
            <person name="Liu J."/>
            <person name="Liuni S."/>
            <person name="McWilliam S."/>
            <person name="Madan Babu M."/>
            <person name="Madera M."/>
            <person name="Marchionni L."/>
            <person name="Matsuda H."/>
            <person name="Matsuzawa S."/>
            <person name="Miki H."/>
            <person name="Mignone F."/>
            <person name="Miyake S."/>
            <person name="Morris K."/>
            <person name="Mottagui-Tabar S."/>
            <person name="Mulder N."/>
            <person name="Nakano N."/>
            <person name="Nakauchi H."/>
            <person name="Ng P."/>
            <person name="Nilsson R."/>
            <person name="Nishiguchi S."/>
            <person name="Nishikawa S."/>
            <person name="Nori F."/>
            <person name="Ohara O."/>
            <person name="Okazaki Y."/>
            <person name="Orlando V."/>
            <person name="Pang K.C."/>
            <person name="Pavan W.J."/>
            <person name="Pavesi G."/>
            <person name="Pesole G."/>
            <person name="Petrovsky N."/>
            <person name="Piazza S."/>
            <person name="Reed J."/>
            <person name="Reid J.F."/>
            <person name="Ring B.Z."/>
            <person name="Ringwald M."/>
            <person name="Rost B."/>
            <person name="Ruan Y."/>
            <person name="Salzberg S.L."/>
            <person name="Sandelin A."/>
            <person name="Schneider C."/>
            <person name="Schoenbach C."/>
            <person name="Sekiguchi K."/>
            <person name="Semple C.A."/>
            <person name="Seno S."/>
            <person name="Sessa L."/>
            <person name="Sheng Y."/>
            <person name="Shibata Y."/>
            <person name="Shimada H."/>
            <person name="Shimada K."/>
            <person name="Silva D."/>
            <person name="Sinclair B."/>
            <person name="Sperling S."/>
            <person name="Stupka E."/>
            <person name="Sugiura K."/>
            <person name="Sultana R."/>
            <person name="Takenaka Y."/>
            <person name="Taki K."/>
            <person name="Tammoja K."/>
            <person name="Tan S.L."/>
            <person name="Tang S."/>
            <person name="Taylor M.S."/>
            <person name="Tegner J."/>
            <person name="Teichmann S.A."/>
            <person name="Ueda H.R."/>
            <person name="van Nimwegen E."/>
            <person name="Verardo R."/>
            <person name="Wei C.L."/>
            <person name="Yagi K."/>
            <person name="Yamanishi H."/>
            <person name="Zabarovsky E."/>
            <person name="Zhu S."/>
            <person name="Zimmer A."/>
            <person name="Hide W."/>
            <person name="Bult C."/>
            <person name="Grimmond S.M."/>
            <person name="Teasdale R.D."/>
            <person name="Liu E.T."/>
            <person name="Brusic V."/>
            <person name="Quackenbush J."/>
            <person name="Wahlestedt C."/>
            <person name="Mattick J.S."/>
            <person name="Hume D.A."/>
            <person name="Kai C."/>
            <person name="Sasaki D."/>
            <person name="Tomaru Y."/>
            <person name="Fukuda S."/>
            <person name="Kanamori-Katayama M."/>
            <person name="Suzuki M."/>
            <person name="Aoki J."/>
            <person name="Arakawa T."/>
            <person name="Iida J."/>
            <person name="Imamura K."/>
            <person name="Itoh M."/>
            <person name="Kato T."/>
            <person name="Kawaji H."/>
            <person name="Kawagashira N."/>
            <person name="Kawashima T."/>
            <person name="Kojima M."/>
            <person name="Kondo S."/>
            <person name="Konno H."/>
            <person name="Nakano K."/>
            <person name="Ninomiya N."/>
            <person name="Nishio T."/>
            <person name="Okada M."/>
            <person name="Plessy C."/>
            <person name="Shibata K."/>
            <person name="Shiraki T."/>
            <person name="Suzuki S."/>
            <person name="Tagami M."/>
            <person name="Waki K."/>
            <person name="Watahiki A."/>
            <person name="Okamura-Oho Y."/>
            <person name="Suzuki H."/>
            <person name="Kawai J."/>
            <person name="Hayashizaki Y."/>
        </authorList>
    </citation>
    <scope>NUCLEOTIDE SEQUENCE [LARGE SCALE MRNA]</scope>
    <source>
        <strain>C57BL/6J</strain>
        <tissue>Adipose tissue</tissue>
        <tissue>Hippocampus</tissue>
        <tissue>Wolffian duct</tissue>
    </source>
</reference>
<reference key="2">
    <citation type="journal article" date="2004" name="Genome Res.">
        <title>The status, quality, and expansion of the NIH full-length cDNA project: the Mammalian Gene Collection (MGC).</title>
        <authorList>
            <consortium name="The MGC Project Team"/>
        </authorList>
    </citation>
    <scope>NUCLEOTIDE SEQUENCE [LARGE SCALE MRNA]</scope>
    <source>
        <tissue>Olfactory epithelium</tissue>
    </source>
</reference>
<reference key="3">
    <citation type="journal article" date="2010" name="Cell">
        <title>A tissue-specific atlas of mouse protein phosphorylation and expression.</title>
        <authorList>
            <person name="Huttlin E.L."/>
            <person name="Jedrychowski M.P."/>
            <person name="Elias J.E."/>
            <person name="Goswami T."/>
            <person name="Rad R."/>
            <person name="Beausoleil S.A."/>
            <person name="Villen J."/>
            <person name="Haas W."/>
            <person name="Sowa M.E."/>
            <person name="Gygi S.P."/>
        </authorList>
    </citation>
    <scope>IDENTIFICATION BY MASS SPECTROMETRY [LARGE SCALE ANALYSIS]</scope>
    <source>
        <tissue>Brown adipose tissue</tissue>
    </source>
</reference>
<reference key="4">
    <citation type="journal article" date="2019" name="Nature">
        <title>BCAA catabolism in brown fat controls energy homeostasis through SLC25A44.</title>
        <authorList>
            <person name="Yoneshiro T."/>
            <person name="Wang Q."/>
            <person name="Tajima K."/>
            <person name="Matsushita M."/>
            <person name="Maki H."/>
            <person name="Igarashi K."/>
            <person name="Dai Z."/>
            <person name="White P.J."/>
            <person name="McGarrah R.W."/>
            <person name="Ilkayeva O.R."/>
            <person name="Deleye Y."/>
            <person name="Oguri Y."/>
            <person name="Kuroda M."/>
            <person name="Ikeda K."/>
            <person name="Li H."/>
            <person name="Ueno A."/>
            <person name="Ohishi M."/>
            <person name="Ishikawa T."/>
            <person name="Kim K."/>
            <person name="Chen Y."/>
            <person name="Sponton C.H."/>
            <person name="Pradhan R.N."/>
            <person name="Majd H."/>
            <person name="Greiner V.J."/>
            <person name="Yoneshiro M."/>
            <person name="Brown Z."/>
            <person name="Chondronikola M."/>
            <person name="Takahashi H."/>
            <person name="Goto T."/>
            <person name="Kawada T."/>
            <person name="Sidossis L."/>
            <person name="Szoka F.C."/>
            <person name="McManus M.T."/>
            <person name="Saito M."/>
            <person name="Soga T."/>
            <person name="Kajimura S."/>
        </authorList>
    </citation>
    <scope>FUNCTION</scope>
    <scope>TRANSPORTER ACTIVITY</scope>
    <scope>SUBCELLULAR LOCATION</scope>
    <scope>INDUCTION BY COLD</scope>
    <scope>TISSUE SPECIFICITY</scope>
    <scope>DEVELOPMENTAL STAGE</scope>
</reference>
<gene>
    <name evidence="4 7" type="primary">Slc25a44</name>
</gene>
<dbReference type="EMBL" id="AK032960">
    <property type="protein sequence ID" value="BAC28100.1"/>
    <property type="molecule type" value="mRNA"/>
</dbReference>
<dbReference type="EMBL" id="AK046586">
    <property type="protein sequence ID" value="BAC32798.1"/>
    <property type="molecule type" value="mRNA"/>
</dbReference>
<dbReference type="EMBL" id="AK083273">
    <property type="protein sequence ID" value="BAC38838.1"/>
    <property type="molecule type" value="mRNA"/>
</dbReference>
<dbReference type="EMBL" id="AK083470">
    <property type="protein sequence ID" value="BAC38927.1"/>
    <property type="molecule type" value="mRNA"/>
</dbReference>
<dbReference type="EMBL" id="BC052771">
    <property type="protein sequence ID" value="AAH52771.2"/>
    <property type="molecule type" value="mRNA"/>
</dbReference>
<dbReference type="CCDS" id="CCDS79943.1"/>
<dbReference type="RefSeq" id="NP_001139348.1">
    <property type="nucleotide sequence ID" value="NM_001145876.2"/>
</dbReference>
<dbReference type="RefSeq" id="NP_001139349.1">
    <property type="nucleotide sequence ID" value="NM_001145877.2"/>
</dbReference>
<dbReference type="RefSeq" id="NP_001268724.1">
    <property type="nucleotide sequence ID" value="NM_001281795.2"/>
</dbReference>
<dbReference type="SMR" id="Q8BGF9"/>
<dbReference type="FunCoup" id="Q8BGF9">
    <property type="interactions" value="2823"/>
</dbReference>
<dbReference type="STRING" id="10090.ENSMUSP00000057871"/>
<dbReference type="iPTMnet" id="Q8BGF9"/>
<dbReference type="PhosphoSitePlus" id="Q8BGF9"/>
<dbReference type="PaxDb" id="10090-ENSMUSP00000057871"/>
<dbReference type="ProteomicsDB" id="260765"/>
<dbReference type="Pumba" id="Q8BGF9"/>
<dbReference type="Antibodypedia" id="47042">
    <property type="antibodies" value="25 antibodies from 11 providers"/>
</dbReference>
<dbReference type="DNASU" id="229517"/>
<dbReference type="Ensembl" id="ENSMUST00000193433.6">
    <property type="protein sequence ID" value="ENSMUSP00000141465.2"/>
    <property type="gene ID" value="ENSMUSG00000050144.14"/>
</dbReference>
<dbReference type="Ensembl" id="ENSMUST00000195657.6">
    <property type="protein sequence ID" value="ENSMUSP00000141780.2"/>
    <property type="gene ID" value="ENSMUSG00000050144.14"/>
</dbReference>
<dbReference type="GeneID" id="229517"/>
<dbReference type="KEGG" id="mmu:229517"/>
<dbReference type="UCSC" id="uc008pvc.3">
    <property type="organism name" value="mouse"/>
</dbReference>
<dbReference type="AGR" id="MGI:2444391"/>
<dbReference type="CTD" id="9673"/>
<dbReference type="MGI" id="MGI:2444391">
    <property type="gene designation" value="Slc25a44"/>
</dbReference>
<dbReference type="VEuPathDB" id="HostDB:ENSMUSG00000050144"/>
<dbReference type="eggNOG" id="KOG0765">
    <property type="taxonomic scope" value="Eukaryota"/>
</dbReference>
<dbReference type="GeneTree" id="ENSGT00940000155399"/>
<dbReference type="InParanoid" id="Q8BGF9"/>
<dbReference type="OrthoDB" id="250329at2759"/>
<dbReference type="PhylomeDB" id="Q8BGF9"/>
<dbReference type="BioGRID-ORCS" id="229517">
    <property type="hits" value="3 hits in 76 CRISPR screens"/>
</dbReference>
<dbReference type="ChiTaRS" id="Slc25a44">
    <property type="organism name" value="mouse"/>
</dbReference>
<dbReference type="PRO" id="PR:Q8BGF9"/>
<dbReference type="Proteomes" id="UP000000589">
    <property type="component" value="Chromosome 3"/>
</dbReference>
<dbReference type="RNAct" id="Q8BGF9">
    <property type="molecule type" value="protein"/>
</dbReference>
<dbReference type="Bgee" id="ENSMUSG00000050144">
    <property type="expression patterns" value="Expressed in dentate gyrus of hippocampal formation granule cell and 253 other cell types or tissues"/>
</dbReference>
<dbReference type="ExpressionAtlas" id="Q8BGF9">
    <property type="expression patterns" value="baseline and differential"/>
</dbReference>
<dbReference type="GO" id="GO:0005743">
    <property type="term" value="C:mitochondrial inner membrane"/>
    <property type="evidence" value="ECO:0000304"/>
    <property type="project" value="Reactome"/>
</dbReference>
<dbReference type="GO" id="GO:0005739">
    <property type="term" value="C:mitochondrion"/>
    <property type="evidence" value="ECO:0000314"/>
    <property type="project" value="UniProtKB"/>
</dbReference>
<dbReference type="GO" id="GO:0015658">
    <property type="term" value="F:branched-chain amino acid transmembrane transporter activity"/>
    <property type="evidence" value="ECO:0000314"/>
    <property type="project" value="UniProtKB"/>
</dbReference>
<dbReference type="GO" id="GO:0006865">
    <property type="term" value="P:amino acid transport"/>
    <property type="evidence" value="ECO:0007669"/>
    <property type="project" value="UniProtKB-KW"/>
</dbReference>
<dbReference type="GO" id="GO:0009083">
    <property type="term" value="P:branched-chain amino acid catabolic process"/>
    <property type="evidence" value="ECO:0000315"/>
    <property type="project" value="UniProtKB"/>
</dbReference>
<dbReference type="GO" id="GO:0015803">
    <property type="term" value="P:branched-chain amino acid transport"/>
    <property type="evidence" value="ECO:0000314"/>
    <property type="project" value="UniProtKB"/>
</dbReference>
<dbReference type="GO" id="GO:0120161">
    <property type="term" value="P:regulation of cold-induced thermogenesis"/>
    <property type="evidence" value="ECO:0000315"/>
    <property type="project" value="UniProtKB"/>
</dbReference>
<dbReference type="FunFam" id="1.50.40.10:FF:000033">
    <property type="entry name" value="Solute carrier family 25 member 44"/>
    <property type="match status" value="1"/>
</dbReference>
<dbReference type="FunFam" id="1.50.40.10:FF:000108">
    <property type="entry name" value="Solute carrier family 25 member 44"/>
    <property type="match status" value="1"/>
</dbReference>
<dbReference type="Gene3D" id="1.50.40.10">
    <property type="entry name" value="Mitochondrial carrier domain"/>
    <property type="match status" value="2"/>
</dbReference>
<dbReference type="InterPro" id="IPR002067">
    <property type="entry name" value="Mit_carrier"/>
</dbReference>
<dbReference type="InterPro" id="IPR018108">
    <property type="entry name" value="Mitochondrial_sb/sol_carrier"/>
</dbReference>
<dbReference type="InterPro" id="IPR023395">
    <property type="entry name" value="Mt_carrier_dom_sf"/>
</dbReference>
<dbReference type="InterPro" id="IPR042164">
    <property type="entry name" value="SLC25A44"/>
</dbReference>
<dbReference type="PANTHER" id="PTHR46314">
    <property type="entry name" value="SOLUTE CARRIER FAMILY 25 MEMBER 44"/>
    <property type="match status" value="1"/>
</dbReference>
<dbReference type="PANTHER" id="PTHR46314:SF2">
    <property type="entry name" value="SOLUTE CARRIER FAMILY 25 MEMBER 44"/>
    <property type="match status" value="1"/>
</dbReference>
<dbReference type="Pfam" id="PF00153">
    <property type="entry name" value="Mito_carr"/>
    <property type="match status" value="3"/>
</dbReference>
<dbReference type="PRINTS" id="PR00926">
    <property type="entry name" value="MITOCARRIER"/>
</dbReference>
<dbReference type="SUPFAM" id="SSF103506">
    <property type="entry name" value="Mitochondrial carrier"/>
    <property type="match status" value="1"/>
</dbReference>
<dbReference type="PROSITE" id="PS50920">
    <property type="entry name" value="SOLCAR"/>
    <property type="match status" value="3"/>
</dbReference>
<evidence type="ECO:0000255" key="1"/>
<evidence type="ECO:0000255" key="2">
    <source>
        <dbReference type="PROSITE-ProRule" id="PRU00282"/>
    </source>
</evidence>
<evidence type="ECO:0000269" key="3">
    <source>
    </source>
</evidence>
<evidence type="ECO:0000303" key="4">
    <source>
    </source>
</evidence>
<evidence type="ECO:0000305" key="5"/>
<evidence type="ECO:0000305" key="6">
    <source>
    </source>
</evidence>
<evidence type="ECO:0000312" key="7">
    <source>
        <dbReference type="MGI" id="MGI:2444391"/>
    </source>
</evidence>
<accession>Q8BGF9</accession>
<accession>Q7TSU9</accession>
<comment type="function">
    <text evidence="3">Mitochondrial solute transporter which transports branched-chain amino acid (BCAA; valine, leucine and isoleucine) into mitochondria in brown adipose tissue (BAT) (PubMed:31435015). BAT is involved in BCAA catabolism and actively utilizes BCAA in the mitochondria for thermogenesis (PubMed:31435015).</text>
</comment>
<comment type="catalytic activity">
    <reaction evidence="6">
        <text>L-valine(in) = L-valine(out)</text>
        <dbReference type="Rhea" id="RHEA:29703"/>
        <dbReference type="ChEBI" id="CHEBI:57762"/>
    </reaction>
</comment>
<comment type="catalytic activity">
    <reaction evidence="6">
        <text>L-leucine(in) = L-leucine(out)</text>
        <dbReference type="Rhea" id="RHEA:73011"/>
        <dbReference type="ChEBI" id="CHEBI:57427"/>
    </reaction>
</comment>
<comment type="subcellular location">
    <subcellularLocation>
        <location evidence="6">Mitochondrion membrane</location>
        <topology evidence="1">Multi-pass membrane protein</topology>
    </subcellularLocation>
</comment>
<comment type="tissue specificity">
    <text evidence="3">Highly expressed in brown adipose tissues compared with other metabolic organs.</text>
</comment>
<comment type="developmental stage">
    <text evidence="3">Expression increases during adipogenesis.</text>
</comment>
<comment type="induction">
    <text evidence="3">Induction by cold exposure in brown adipose tissues.</text>
</comment>
<comment type="similarity">
    <text evidence="1">Belongs to the mitochondrial carrier (TC 2.A.29) family.</text>
</comment>
<protein>
    <recommendedName>
        <fullName evidence="5">Solute carrier family 25 member 44</fullName>
    </recommendedName>
</protein>
<sequence length="314" mass="35339">MEDKRNIQIIEWEHLDKKKFYVFGVAMTMMIRVSVYPFTLIRTRLQVQKGKSLYHGTFDAFVKILRADGVAGLYRGFLVNTFTLISGQCYVTTYELTRKFVADYSQSNTVKSLVAGGSASLVAQSITVPIDVVSQHLMMQRKGEKMGRFQVHGNLEGQGVIAFGQTKDIIRQILRADGLRGFYRGYVASLLTYIPNSAVWWPFYHFYAEQLSRLCPQECPHIVFQAISGPLAAATASILTNPMDVIRTRVQVEGKSSIVLTFRQLMAEEGPWGLMKGLSARIISATPSTIVIVVGYESLKKLSLRPELVDSRHW</sequence>
<feature type="chain" id="PRO_0000253065" description="Solute carrier family 25 member 44">
    <location>
        <begin position="1"/>
        <end position="314"/>
    </location>
</feature>
<feature type="transmembrane region" description="Helical; Name=1" evidence="1">
    <location>
        <begin position="20"/>
        <end position="42"/>
    </location>
</feature>
<feature type="transmembrane region" description="Helical; Name=2" evidence="1">
    <location>
        <begin position="71"/>
        <end position="90"/>
    </location>
</feature>
<feature type="transmembrane region" description="Helical; Name=3" evidence="1">
    <location>
        <begin position="113"/>
        <end position="133"/>
    </location>
</feature>
<feature type="transmembrane region" description="Helical; Name=4" evidence="1">
    <location>
        <begin position="185"/>
        <end position="201"/>
    </location>
</feature>
<feature type="transmembrane region" description="Helical; Name=5" evidence="1">
    <location>
        <begin position="222"/>
        <end position="239"/>
    </location>
</feature>
<feature type="transmembrane region" description="Helical; Name=6" evidence="1">
    <location>
        <begin position="278"/>
        <end position="296"/>
    </location>
</feature>
<feature type="repeat" description="Solcar 1" evidence="2">
    <location>
        <begin position="18"/>
        <end position="100"/>
    </location>
</feature>
<feature type="repeat" description="Solcar 2" evidence="2">
    <location>
        <begin position="107"/>
        <end position="210"/>
    </location>
</feature>
<feature type="repeat" description="Solcar 3" evidence="2">
    <location>
        <begin position="220"/>
        <end position="302"/>
    </location>
</feature>
<proteinExistence type="evidence at protein level"/>
<keyword id="KW-0029">Amino-acid transport</keyword>
<keyword id="KW-0472">Membrane</keyword>
<keyword id="KW-0496">Mitochondrion</keyword>
<keyword id="KW-1185">Reference proteome</keyword>
<keyword id="KW-0677">Repeat</keyword>
<keyword id="KW-0812">Transmembrane</keyword>
<keyword id="KW-1133">Transmembrane helix</keyword>
<keyword id="KW-0813">Transport</keyword>
<organism>
    <name type="scientific">Mus musculus</name>
    <name type="common">Mouse</name>
    <dbReference type="NCBI Taxonomy" id="10090"/>
    <lineage>
        <taxon>Eukaryota</taxon>
        <taxon>Metazoa</taxon>
        <taxon>Chordata</taxon>
        <taxon>Craniata</taxon>
        <taxon>Vertebrata</taxon>
        <taxon>Euteleostomi</taxon>
        <taxon>Mammalia</taxon>
        <taxon>Eutheria</taxon>
        <taxon>Euarchontoglires</taxon>
        <taxon>Glires</taxon>
        <taxon>Rodentia</taxon>
        <taxon>Myomorpha</taxon>
        <taxon>Muroidea</taxon>
        <taxon>Muridae</taxon>
        <taxon>Murinae</taxon>
        <taxon>Mus</taxon>
        <taxon>Mus</taxon>
    </lineage>
</organism>